<feature type="chain" id="PRO_0000161689" description="Basic phospholipase A2 PA-13">
    <location>
        <begin position="1"/>
        <end position="118"/>
    </location>
</feature>
<feature type="active site" evidence="1">
    <location>
        <position position="48"/>
    </location>
</feature>
<feature type="active site" evidence="1">
    <location>
        <position position="92"/>
    </location>
</feature>
<feature type="binding site" evidence="1">
    <location>
        <position position="28"/>
    </location>
    <ligand>
        <name>Ca(2+)</name>
        <dbReference type="ChEBI" id="CHEBI:29108"/>
    </ligand>
</feature>
<feature type="binding site" evidence="1">
    <location>
        <position position="30"/>
    </location>
    <ligand>
        <name>Ca(2+)</name>
        <dbReference type="ChEBI" id="CHEBI:29108"/>
    </ligand>
</feature>
<feature type="binding site" evidence="1">
    <location>
        <position position="32"/>
    </location>
    <ligand>
        <name>Ca(2+)</name>
        <dbReference type="ChEBI" id="CHEBI:29108"/>
    </ligand>
</feature>
<feature type="binding site" evidence="1">
    <location>
        <position position="49"/>
    </location>
    <ligand>
        <name>Ca(2+)</name>
        <dbReference type="ChEBI" id="CHEBI:29108"/>
    </ligand>
</feature>
<feature type="disulfide bond" evidence="1">
    <location>
        <begin position="11"/>
        <end position="71"/>
    </location>
</feature>
<feature type="disulfide bond" evidence="1">
    <location>
        <begin position="27"/>
        <end position="117"/>
    </location>
</feature>
<feature type="disulfide bond" evidence="1">
    <location>
        <begin position="29"/>
        <end position="45"/>
    </location>
</feature>
<feature type="disulfide bond" evidence="1">
    <location>
        <begin position="44"/>
        <end position="98"/>
    </location>
</feature>
<feature type="disulfide bond" evidence="1">
    <location>
        <begin position="51"/>
        <end position="91"/>
    </location>
</feature>
<feature type="disulfide bond" evidence="1">
    <location>
        <begin position="60"/>
        <end position="84"/>
    </location>
</feature>
<feature type="disulfide bond" evidence="1">
    <location>
        <begin position="78"/>
        <end position="89"/>
    </location>
</feature>
<sequence>NILQFRKMIQCANKGSRAAWHYLDYGCYCGPGGRGTPVDELDRCCKIHDDCYIEAGKDGCYPKLTWYSWDCTGDAPTCNPKSKCKDFVCACDAAAAKCFAKAPYNKANWNIDTKTRCK</sequence>
<keyword id="KW-0106">Calcium</keyword>
<keyword id="KW-0903">Direct protein sequencing</keyword>
<keyword id="KW-1015">Disulfide bond</keyword>
<keyword id="KW-0378">Hydrolase</keyword>
<keyword id="KW-0442">Lipid degradation</keyword>
<keyword id="KW-0443">Lipid metabolism</keyword>
<keyword id="KW-0479">Metal-binding</keyword>
<keyword id="KW-0964">Secreted</keyword>
<evidence type="ECO:0000250" key="1"/>
<evidence type="ECO:0000255" key="2">
    <source>
        <dbReference type="PROSITE-ProRule" id="PRU10035"/>
    </source>
</evidence>
<evidence type="ECO:0000255" key="3">
    <source>
        <dbReference type="PROSITE-ProRule" id="PRU10036"/>
    </source>
</evidence>
<evidence type="ECO:0000269" key="4">
    <source>
    </source>
</evidence>
<evidence type="ECO:0000305" key="5"/>
<proteinExistence type="evidence at protein level"/>
<comment type="function">
    <text>PLA2 catalyzes the calcium-dependent hydrolysis of the 2-acyl groups in 3-sn-phosphoglycerides.</text>
</comment>
<comment type="catalytic activity">
    <reaction evidence="2 3">
        <text>a 1,2-diacyl-sn-glycero-3-phosphocholine + H2O = a 1-acyl-sn-glycero-3-phosphocholine + a fatty acid + H(+)</text>
        <dbReference type="Rhea" id="RHEA:15801"/>
        <dbReference type="ChEBI" id="CHEBI:15377"/>
        <dbReference type="ChEBI" id="CHEBI:15378"/>
        <dbReference type="ChEBI" id="CHEBI:28868"/>
        <dbReference type="ChEBI" id="CHEBI:57643"/>
        <dbReference type="ChEBI" id="CHEBI:58168"/>
        <dbReference type="EC" id="3.1.1.4"/>
    </reaction>
</comment>
<comment type="cofactor">
    <cofactor evidence="1">
        <name>Ca(2+)</name>
        <dbReference type="ChEBI" id="CHEBI:29108"/>
    </cofactor>
    <text evidence="1">Binds 1 Ca(2+) ion.</text>
</comment>
<comment type="subcellular location">
    <subcellularLocation>
        <location>Secreted</location>
    </subcellularLocation>
</comment>
<comment type="tissue specificity">
    <text>Expressed by the venom gland.</text>
</comment>
<comment type="toxic dose">
    <text evidence="4">LD(50) is 6.8 mg/kg by intravenous injection.</text>
</comment>
<comment type="similarity">
    <text evidence="5">Belongs to the phospholipase A2 family. Group I subfamily. D49 sub-subfamily.</text>
</comment>
<organism>
    <name type="scientific">Pseudechis australis</name>
    <name type="common">Mulga snake</name>
    <name type="synonym">King brown snake</name>
    <dbReference type="NCBI Taxonomy" id="8670"/>
    <lineage>
        <taxon>Eukaryota</taxon>
        <taxon>Metazoa</taxon>
        <taxon>Chordata</taxon>
        <taxon>Craniata</taxon>
        <taxon>Vertebrata</taxon>
        <taxon>Euteleostomi</taxon>
        <taxon>Lepidosauria</taxon>
        <taxon>Squamata</taxon>
        <taxon>Bifurcata</taxon>
        <taxon>Unidentata</taxon>
        <taxon>Episquamata</taxon>
        <taxon>Toxicofera</taxon>
        <taxon>Serpentes</taxon>
        <taxon>Colubroidea</taxon>
        <taxon>Elapidae</taxon>
        <taxon>Hydrophiinae</taxon>
        <taxon>Pseudechis</taxon>
    </lineage>
</organism>
<accession>P04057</accession>
<protein>
    <recommendedName>
        <fullName>Basic phospholipase A2 PA-13</fullName>
        <shortName>svPLA2</shortName>
        <ecNumber>3.1.1.4</ecNumber>
    </recommendedName>
    <alternativeName>
        <fullName>Phosphatidylcholine 2-acylhydrolase</fullName>
    </alternativeName>
</protein>
<name>PA2BD_PSEAU</name>
<reference key="1">
    <citation type="journal article" date="1985" name="Toxicon">
        <title>Amino acid sequences of phospholipases A2 from the venom of an Australian elapid snake (king brown snake, Pseudechis australis).</title>
        <authorList>
            <person name="Nishida S."/>
            <person name="Terashima M."/>
            <person name="Tamiya N."/>
        </authorList>
    </citation>
    <scope>PROTEIN SEQUENCE</scope>
    <scope>TOXIC DOSE</scope>
    <source>
        <tissue>Venom</tissue>
    </source>
</reference>
<dbReference type="EC" id="3.1.1.4"/>
<dbReference type="PIR" id="A00748">
    <property type="entry name" value="PSSNK3"/>
</dbReference>
<dbReference type="SMR" id="P04057"/>
<dbReference type="GO" id="GO:0005576">
    <property type="term" value="C:extracellular region"/>
    <property type="evidence" value="ECO:0007669"/>
    <property type="project" value="UniProtKB-SubCell"/>
</dbReference>
<dbReference type="GO" id="GO:0005509">
    <property type="term" value="F:calcium ion binding"/>
    <property type="evidence" value="ECO:0007669"/>
    <property type="project" value="InterPro"/>
</dbReference>
<dbReference type="GO" id="GO:0047498">
    <property type="term" value="F:calcium-dependent phospholipase A2 activity"/>
    <property type="evidence" value="ECO:0007669"/>
    <property type="project" value="TreeGrafter"/>
</dbReference>
<dbReference type="GO" id="GO:0005543">
    <property type="term" value="F:phospholipid binding"/>
    <property type="evidence" value="ECO:0007669"/>
    <property type="project" value="TreeGrafter"/>
</dbReference>
<dbReference type="GO" id="GO:0050482">
    <property type="term" value="P:arachidonate secretion"/>
    <property type="evidence" value="ECO:0007669"/>
    <property type="project" value="InterPro"/>
</dbReference>
<dbReference type="GO" id="GO:0016042">
    <property type="term" value="P:lipid catabolic process"/>
    <property type="evidence" value="ECO:0007669"/>
    <property type="project" value="UniProtKB-KW"/>
</dbReference>
<dbReference type="GO" id="GO:0006644">
    <property type="term" value="P:phospholipid metabolic process"/>
    <property type="evidence" value="ECO:0007669"/>
    <property type="project" value="InterPro"/>
</dbReference>
<dbReference type="CDD" id="cd00125">
    <property type="entry name" value="PLA2c"/>
    <property type="match status" value="1"/>
</dbReference>
<dbReference type="FunFam" id="1.20.90.10:FF:000007">
    <property type="entry name" value="Acidic phospholipase A2"/>
    <property type="match status" value="1"/>
</dbReference>
<dbReference type="Gene3D" id="1.20.90.10">
    <property type="entry name" value="Phospholipase A2 domain"/>
    <property type="match status" value="1"/>
</dbReference>
<dbReference type="InterPro" id="IPR001211">
    <property type="entry name" value="PLipase_A2"/>
</dbReference>
<dbReference type="InterPro" id="IPR033112">
    <property type="entry name" value="PLipase_A2_Asp_AS"/>
</dbReference>
<dbReference type="InterPro" id="IPR016090">
    <property type="entry name" value="PLipase_A2_dom"/>
</dbReference>
<dbReference type="InterPro" id="IPR036444">
    <property type="entry name" value="PLipase_A2_dom_sf"/>
</dbReference>
<dbReference type="InterPro" id="IPR033113">
    <property type="entry name" value="PLipase_A2_His_AS"/>
</dbReference>
<dbReference type="PANTHER" id="PTHR11716:SF51">
    <property type="entry name" value="PHOSPHOLIPASE A2"/>
    <property type="match status" value="1"/>
</dbReference>
<dbReference type="PANTHER" id="PTHR11716">
    <property type="entry name" value="PHOSPHOLIPASE A2 FAMILY MEMBER"/>
    <property type="match status" value="1"/>
</dbReference>
<dbReference type="Pfam" id="PF00068">
    <property type="entry name" value="Phospholip_A2_1"/>
    <property type="match status" value="1"/>
</dbReference>
<dbReference type="PRINTS" id="PR00389">
    <property type="entry name" value="PHPHLIPASEA2"/>
</dbReference>
<dbReference type="SMART" id="SM00085">
    <property type="entry name" value="PA2c"/>
    <property type="match status" value="1"/>
</dbReference>
<dbReference type="SUPFAM" id="SSF48619">
    <property type="entry name" value="Phospholipase A2, PLA2"/>
    <property type="match status" value="1"/>
</dbReference>
<dbReference type="PROSITE" id="PS00119">
    <property type="entry name" value="PA2_ASP"/>
    <property type="match status" value="1"/>
</dbReference>
<dbReference type="PROSITE" id="PS00118">
    <property type="entry name" value="PA2_HIS"/>
    <property type="match status" value="1"/>
</dbReference>